<comment type="function">
    <text evidence="3 4">Transcription regulator that may be involved in the control of the pre-rRNA processing machinery. Can rescue the phenotypes of slow growth and defective rRNA processing in the yeast fhl1 null mutant (PubMed:12149245). Shows transactivation activity in yeast (PubMed:23192389).</text>
</comment>
<comment type="subcellular location">
    <subcellularLocation>
        <location evidence="3">Nucleus</location>
    </subcellularLocation>
</comment>
<comment type="tissue specificity">
    <text evidence="3">Expressed in roots, stems, leaves, young flower buds and open flowers.</text>
</comment>
<comment type="developmental stage">
    <text evidence="3">Down-regulated in germinating seeds between 3 and 5 days after germination. Down-regulated in flowers from 5 days after pollination.</text>
</comment>
<proteinExistence type="evidence at protein level"/>
<name>FHA1_TOBAC</name>
<organism>
    <name type="scientific">Nicotiana tabacum</name>
    <name type="common">Common tobacco</name>
    <dbReference type="NCBI Taxonomy" id="4097"/>
    <lineage>
        <taxon>Eukaryota</taxon>
        <taxon>Viridiplantae</taxon>
        <taxon>Streptophyta</taxon>
        <taxon>Embryophyta</taxon>
        <taxon>Tracheophyta</taxon>
        <taxon>Spermatophyta</taxon>
        <taxon>Magnoliopsida</taxon>
        <taxon>eudicotyledons</taxon>
        <taxon>Gunneridae</taxon>
        <taxon>Pentapetalae</taxon>
        <taxon>asterids</taxon>
        <taxon>lamiids</taxon>
        <taxon>Solanales</taxon>
        <taxon>Solanaceae</taxon>
        <taxon>Nicotianoideae</taxon>
        <taxon>Nicotianeae</taxon>
        <taxon>Nicotiana</taxon>
    </lineage>
</organism>
<feature type="chain" id="PRO_0000433005" description="Transcriptional activator FHA1">
    <location>
        <begin position="1"/>
        <end position="209"/>
    </location>
</feature>
<feature type="domain" description="FHA" evidence="1">
    <location>
        <begin position="30"/>
        <end position="87"/>
    </location>
</feature>
<feature type="region of interest" description="Disordered" evidence="2">
    <location>
        <begin position="157"/>
        <end position="209"/>
    </location>
</feature>
<feature type="compositionally biased region" description="Acidic residues" evidence="2">
    <location>
        <begin position="157"/>
        <end position="171"/>
    </location>
</feature>
<feature type="compositionally biased region" description="Gly residues" evidence="2">
    <location>
        <begin position="183"/>
        <end position="196"/>
    </location>
</feature>
<feature type="compositionally biased region" description="Polar residues" evidence="2">
    <location>
        <begin position="200"/>
        <end position="209"/>
    </location>
</feature>
<feature type="mutagenesis site" description="Loss of function." evidence="3">
    <original>R</original>
    <variation>A</variation>
    <location>
        <position position="34"/>
    </location>
</feature>
<feature type="mutagenesis site" description="Loss of function." evidence="3">
    <original>S</original>
    <variation>A</variation>
    <location>
        <position position="55"/>
    </location>
</feature>
<protein>
    <recommendedName>
        <fullName evidence="5">Transcriptional activator FHA1</fullName>
    </recommendedName>
    <alternativeName>
        <fullName evidence="5">Protein FORKHEAD-ASSOCIATED DOMAIN 1</fullName>
        <shortName evidence="5">NtFHA1</shortName>
    </alternativeName>
</protein>
<gene>
    <name evidence="5" type="primary">FHA1</name>
</gene>
<evidence type="ECO:0000255" key="1">
    <source>
        <dbReference type="PROSITE-ProRule" id="PRU00086"/>
    </source>
</evidence>
<evidence type="ECO:0000256" key="2">
    <source>
        <dbReference type="SAM" id="MobiDB-lite"/>
    </source>
</evidence>
<evidence type="ECO:0000269" key="3">
    <source>
    </source>
</evidence>
<evidence type="ECO:0000269" key="4">
    <source>
    </source>
</evidence>
<evidence type="ECO:0000303" key="5">
    <source>
    </source>
</evidence>
<sequence>MGSSSGSDVEAGFAKLQGEDFEYYMQTYSIILGRNSKKSTVDVDLSSLGGGMNISRHHARIFYDFQRRRFNLEVLGKNGCFVEGVLHLPGNPPIKLDSQDLLQIGDKEFYFLLPVRSILGGGPPIGPKQNVNYPVAAHYGGIGKKGGLFRGREREYYDEEEYDDDDDDDDGTGGKKMRRCDGAEGGGGYGGYGSCGSSGKASISGQLGQ</sequence>
<reference key="1">
    <citation type="journal article" date="2002" name="J. Biol. Chem.">
        <title>Forkhead-associated domains of the tobacco NtFHA1 transcription activator and the yeast Fhl1 forkhead transcription factor are functionally conserved.</title>
        <authorList>
            <person name="Kim M."/>
            <person name="Ahn J.W."/>
            <person name="Song K."/>
            <person name="Paek K.H."/>
            <person name="Pai H.S."/>
        </authorList>
    </citation>
    <scope>NUCLEOTIDE SEQUENCE [MRNA]</scope>
    <scope>FUNCTION</scope>
    <scope>SUBCELLULAR LOCATION</scope>
    <scope>TISSUE SPECIFICITY</scope>
    <scope>DEVELOPMENTAL STAGE</scope>
    <scope>MUTAGENESIS OF ARG-34 AND SER-55</scope>
    <source>
        <strain>cv. Xanti</strain>
    </source>
</reference>
<reference key="2">
    <citation type="journal article" date="2013" name="Planta">
        <title>The forkhead-associated domain 2 (FHA2) in Arabidopsis plays a role in plant fertility by regulating stamen development.</title>
        <authorList>
            <person name="Ahn E.R."/>
            <person name="Cho H.K."/>
            <person name="Pai H.S."/>
        </authorList>
    </citation>
    <scope>FUNCTION</scope>
</reference>
<accession>Q945P0</accession>
<dbReference type="EMBL" id="AF411856">
    <property type="protein sequence ID" value="AAL05884.1"/>
    <property type="molecule type" value="mRNA"/>
</dbReference>
<dbReference type="SMR" id="Q945P0"/>
<dbReference type="STRING" id="4097.Q945P0"/>
<dbReference type="PaxDb" id="4097-Q945P0"/>
<dbReference type="Proteomes" id="UP000084051">
    <property type="component" value="Unplaced"/>
</dbReference>
<dbReference type="GO" id="GO:0005634">
    <property type="term" value="C:nucleus"/>
    <property type="evidence" value="ECO:0000314"/>
    <property type="project" value="UniProtKB"/>
</dbReference>
<dbReference type="GO" id="GO:0043565">
    <property type="term" value="F:sequence-specific DNA binding"/>
    <property type="evidence" value="ECO:0000318"/>
    <property type="project" value="GO_Central"/>
</dbReference>
<dbReference type="GO" id="GO:0006355">
    <property type="term" value="P:regulation of DNA-templated transcription"/>
    <property type="evidence" value="ECO:0000314"/>
    <property type="project" value="UniProtKB"/>
</dbReference>
<dbReference type="GO" id="GO:0060962">
    <property type="term" value="P:regulation of ribosomal protein gene transcription by RNA polymerase II"/>
    <property type="evidence" value="ECO:0007669"/>
    <property type="project" value="InterPro"/>
</dbReference>
<dbReference type="CDD" id="cd22701">
    <property type="entry name" value="FHA_FKH1-like"/>
    <property type="match status" value="1"/>
</dbReference>
<dbReference type="FunFam" id="2.60.200.20:FF:000014">
    <property type="entry name" value="FHA domain-containing protein FHA2"/>
    <property type="match status" value="1"/>
</dbReference>
<dbReference type="Gene3D" id="2.60.200.20">
    <property type="match status" value="1"/>
</dbReference>
<dbReference type="InterPro" id="IPR000253">
    <property type="entry name" value="FHA_dom"/>
</dbReference>
<dbReference type="InterPro" id="IPR045178">
    <property type="entry name" value="Fhl1/FHA1"/>
</dbReference>
<dbReference type="InterPro" id="IPR008984">
    <property type="entry name" value="SMAD_FHA_dom_sf"/>
</dbReference>
<dbReference type="PANTHER" id="PTHR21712">
    <property type="entry name" value="PRE-RRNA-PROCESSING PROTEIN FHL1"/>
    <property type="match status" value="1"/>
</dbReference>
<dbReference type="PANTHER" id="PTHR21712:SF29">
    <property type="entry name" value="PRE-RRNA-PROCESSING PROTEIN FHL1"/>
    <property type="match status" value="1"/>
</dbReference>
<dbReference type="Pfam" id="PF00498">
    <property type="entry name" value="FHA"/>
    <property type="match status" value="1"/>
</dbReference>
<dbReference type="SMART" id="SM00240">
    <property type="entry name" value="FHA"/>
    <property type="match status" value="1"/>
</dbReference>
<dbReference type="SUPFAM" id="SSF49879">
    <property type="entry name" value="SMAD/FHA domain"/>
    <property type="match status" value="1"/>
</dbReference>
<dbReference type="PROSITE" id="PS50006">
    <property type="entry name" value="FHA_DOMAIN"/>
    <property type="match status" value="1"/>
</dbReference>
<keyword id="KW-0539">Nucleus</keyword>
<keyword id="KW-1185">Reference proteome</keyword>
<keyword id="KW-0804">Transcription</keyword>
<keyword id="KW-0805">Transcription regulation</keyword>